<reference key="1">
    <citation type="journal article" date="2005" name="Nat. Biotechnol.">
        <title>Complete genome sequence of the plant commensal Pseudomonas fluorescens Pf-5.</title>
        <authorList>
            <person name="Paulsen I.T."/>
            <person name="Press C.M."/>
            <person name="Ravel J."/>
            <person name="Kobayashi D.Y."/>
            <person name="Myers G.S.A."/>
            <person name="Mavrodi D.V."/>
            <person name="DeBoy R.T."/>
            <person name="Seshadri R."/>
            <person name="Ren Q."/>
            <person name="Madupu R."/>
            <person name="Dodson R.J."/>
            <person name="Durkin A.S."/>
            <person name="Brinkac L.M."/>
            <person name="Daugherty S.C."/>
            <person name="Sullivan S.A."/>
            <person name="Rosovitz M.J."/>
            <person name="Gwinn M.L."/>
            <person name="Zhou L."/>
            <person name="Schneider D.J."/>
            <person name="Cartinhour S.W."/>
            <person name="Nelson W.C."/>
            <person name="Weidman J."/>
            <person name="Watkins K."/>
            <person name="Tran K."/>
            <person name="Khouri H."/>
            <person name="Pierson E.A."/>
            <person name="Pierson L.S. III"/>
            <person name="Thomashow L.S."/>
            <person name="Loper J.E."/>
        </authorList>
    </citation>
    <scope>NUCLEOTIDE SEQUENCE [LARGE SCALE GENOMIC DNA]</scope>
    <source>
        <strain>ATCC BAA-477 / NRRL B-23932 / Pf-5</strain>
    </source>
</reference>
<dbReference type="EMBL" id="CP000076">
    <property type="protein sequence ID" value="AAY95421.1"/>
    <property type="molecule type" value="Genomic_DNA"/>
</dbReference>
<dbReference type="RefSeq" id="WP_011058393.1">
    <property type="nucleotide sequence ID" value="NC_004129.6"/>
</dbReference>
<dbReference type="SMR" id="Q4KKS8"/>
<dbReference type="STRING" id="220664.PFL_0003"/>
<dbReference type="GeneID" id="57472974"/>
<dbReference type="KEGG" id="pfl:PFL_0003"/>
<dbReference type="PATRIC" id="fig|220664.5.peg.3"/>
<dbReference type="eggNOG" id="COG1195">
    <property type="taxonomic scope" value="Bacteria"/>
</dbReference>
<dbReference type="HOGENOM" id="CLU_040267_0_0_6"/>
<dbReference type="Proteomes" id="UP000008540">
    <property type="component" value="Chromosome"/>
</dbReference>
<dbReference type="GO" id="GO:0005737">
    <property type="term" value="C:cytoplasm"/>
    <property type="evidence" value="ECO:0007669"/>
    <property type="project" value="UniProtKB-SubCell"/>
</dbReference>
<dbReference type="GO" id="GO:0005524">
    <property type="term" value="F:ATP binding"/>
    <property type="evidence" value="ECO:0007669"/>
    <property type="project" value="UniProtKB-UniRule"/>
</dbReference>
<dbReference type="GO" id="GO:0003697">
    <property type="term" value="F:single-stranded DNA binding"/>
    <property type="evidence" value="ECO:0007669"/>
    <property type="project" value="UniProtKB-UniRule"/>
</dbReference>
<dbReference type="GO" id="GO:0006260">
    <property type="term" value="P:DNA replication"/>
    <property type="evidence" value="ECO:0007669"/>
    <property type="project" value="UniProtKB-UniRule"/>
</dbReference>
<dbReference type="GO" id="GO:0000731">
    <property type="term" value="P:DNA synthesis involved in DNA repair"/>
    <property type="evidence" value="ECO:0007669"/>
    <property type="project" value="TreeGrafter"/>
</dbReference>
<dbReference type="GO" id="GO:0006302">
    <property type="term" value="P:double-strand break repair"/>
    <property type="evidence" value="ECO:0007669"/>
    <property type="project" value="TreeGrafter"/>
</dbReference>
<dbReference type="GO" id="GO:0009432">
    <property type="term" value="P:SOS response"/>
    <property type="evidence" value="ECO:0007669"/>
    <property type="project" value="UniProtKB-UniRule"/>
</dbReference>
<dbReference type="FunFam" id="1.20.1050.90:FF:000003">
    <property type="entry name" value="DNA replication and repair protein RecF"/>
    <property type="match status" value="1"/>
</dbReference>
<dbReference type="Gene3D" id="3.40.50.300">
    <property type="entry name" value="P-loop containing nucleotide triphosphate hydrolases"/>
    <property type="match status" value="1"/>
</dbReference>
<dbReference type="Gene3D" id="1.20.1050.90">
    <property type="entry name" value="RecF/RecN/SMC, N-terminal domain"/>
    <property type="match status" value="1"/>
</dbReference>
<dbReference type="HAMAP" id="MF_00365">
    <property type="entry name" value="RecF"/>
    <property type="match status" value="1"/>
</dbReference>
<dbReference type="InterPro" id="IPR001238">
    <property type="entry name" value="DNA-binding_RecF"/>
</dbReference>
<dbReference type="InterPro" id="IPR018078">
    <property type="entry name" value="DNA-binding_RecF_CS"/>
</dbReference>
<dbReference type="InterPro" id="IPR027417">
    <property type="entry name" value="P-loop_NTPase"/>
</dbReference>
<dbReference type="InterPro" id="IPR003395">
    <property type="entry name" value="RecF/RecN/SMC_N"/>
</dbReference>
<dbReference type="InterPro" id="IPR042174">
    <property type="entry name" value="RecF_2"/>
</dbReference>
<dbReference type="NCBIfam" id="TIGR00611">
    <property type="entry name" value="recf"/>
    <property type="match status" value="1"/>
</dbReference>
<dbReference type="PANTHER" id="PTHR32182">
    <property type="entry name" value="DNA REPLICATION AND REPAIR PROTEIN RECF"/>
    <property type="match status" value="1"/>
</dbReference>
<dbReference type="PANTHER" id="PTHR32182:SF0">
    <property type="entry name" value="DNA REPLICATION AND REPAIR PROTEIN RECF"/>
    <property type="match status" value="1"/>
</dbReference>
<dbReference type="Pfam" id="PF02463">
    <property type="entry name" value="SMC_N"/>
    <property type="match status" value="1"/>
</dbReference>
<dbReference type="SUPFAM" id="SSF52540">
    <property type="entry name" value="P-loop containing nucleoside triphosphate hydrolases"/>
    <property type="match status" value="1"/>
</dbReference>
<dbReference type="PROSITE" id="PS00617">
    <property type="entry name" value="RECF_1"/>
    <property type="match status" value="1"/>
</dbReference>
<dbReference type="PROSITE" id="PS00618">
    <property type="entry name" value="RECF_2"/>
    <property type="match status" value="1"/>
</dbReference>
<protein>
    <recommendedName>
        <fullName evidence="1">DNA replication and repair protein RecF</fullName>
    </recommendedName>
</protein>
<proteinExistence type="inferred from homology"/>
<gene>
    <name evidence="1" type="primary">recF</name>
    <name type="ordered locus">PFL_0003</name>
</gene>
<keyword id="KW-0067">ATP-binding</keyword>
<keyword id="KW-0963">Cytoplasm</keyword>
<keyword id="KW-0227">DNA damage</keyword>
<keyword id="KW-0234">DNA repair</keyword>
<keyword id="KW-0235">DNA replication</keyword>
<keyword id="KW-0238">DNA-binding</keyword>
<keyword id="KW-0547">Nucleotide-binding</keyword>
<keyword id="KW-0742">SOS response</keyword>
<accession>Q4KKS8</accession>
<comment type="function">
    <text evidence="1">The RecF protein is involved in DNA metabolism; it is required for DNA replication and normal SOS inducibility. RecF binds preferentially to single-stranded, linear DNA. It also seems to bind ATP.</text>
</comment>
<comment type="subcellular location">
    <subcellularLocation>
        <location evidence="1">Cytoplasm</location>
    </subcellularLocation>
</comment>
<comment type="similarity">
    <text evidence="1">Belongs to the RecF family.</text>
</comment>
<organism>
    <name type="scientific">Pseudomonas fluorescens (strain ATCC BAA-477 / NRRL B-23932 / Pf-5)</name>
    <dbReference type="NCBI Taxonomy" id="220664"/>
    <lineage>
        <taxon>Bacteria</taxon>
        <taxon>Pseudomonadati</taxon>
        <taxon>Pseudomonadota</taxon>
        <taxon>Gammaproteobacteria</taxon>
        <taxon>Pseudomonadales</taxon>
        <taxon>Pseudomonadaceae</taxon>
        <taxon>Pseudomonas</taxon>
    </lineage>
</organism>
<sequence>MSLSRVSVTAVRNLHPVTFSPSPRINLLYGANGSGKTSVLEAIHLLGLARSFRSARLLPVIQYEQLACTVFGQVELAQGGHSSLGISRDRQGEFQIRIDGQNARSAAQLAEILPLQLINPDSFRLLEGAPKIRRQFLDWGVFHVEPRFMSTWQRLQKALRQRNSWLRHGTLDAASQAAWDRELCQASAEIDEYRRAYIKALKPVFERTLGELLQLEGLTLSYYRGWDKDRELSEVLATALHRDQQMGHTQAGPQRADLRLRLGGHNAADILSRGQQKLVVCALRIAQGHLVSQARRGQCIYLVDDLPSELDEQHRRALCRLLEDLRCQVFITCVDHELLREGWQTETPVALFHVEQGRITQTHDHRE</sequence>
<feature type="chain" id="PRO_0000236134" description="DNA replication and repair protein RecF">
    <location>
        <begin position="1"/>
        <end position="367"/>
    </location>
</feature>
<feature type="binding site" evidence="1">
    <location>
        <begin position="30"/>
        <end position="37"/>
    </location>
    <ligand>
        <name>ATP</name>
        <dbReference type="ChEBI" id="CHEBI:30616"/>
    </ligand>
</feature>
<evidence type="ECO:0000255" key="1">
    <source>
        <dbReference type="HAMAP-Rule" id="MF_00365"/>
    </source>
</evidence>
<name>RECF_PSEF5</name>